<gene>
    <name type="primary">set5</name>
    <name type="ORF">SPCC1739.05</name>
</gene>
<protein>
    <recommendedName>
        <fullName>Histone-lysine N-methyltransferase set5</fullName>
        <ecNumber evidence="1">2.1.1.-</ecNumber>
    </recommendedName>
</protein>
<evidence type="ECO:0000250" key="1">
    <source>
        <dbReference type="UniProtKB" id="P38890"/>
    </source>
</evidence>
<evidence type="ECO:0000255" key="2">
    <source>
        <dbReference type="PROSITE-ProRule" id="PRU00190"/>
    </source>
</evidence>
<evidence type="ECO:0000269" key="3">
    <source>
    </source>
</evidence>
<evidence type="ECO:0000269" key="4">
    <source>
    </source>
</evidence>
<evidence type="ECO:0000305" key="5">
    <source>
    </source>
</evidence>
<evidence type="ECO:0000305" key="6">
    <source>
    </source>
</evidence>
<accession>O74467</accession>
<name>SET5_SCHPO</name>
<sequence length="319" mass="36499">MNPYETEIYKVVPIPNKGMGMIAKVKIPVGTRIFAETPLIRTKSDAKEIEEALSTKTKEEQEAFHRLFNAHPDTMGPFLGPFYSNALTIDETKGGMFLLGSRMNHDCSPNVKHTWNPRLDQVTVHAVRDIEAGEEILTTYIDLHKSHTERQKILLEHFGFKCYCSVCSVEERKIRKISDLRRKQLAYYDRTMAKMCIVNPRGALRALRHRIHIAHEELLFGRLDIIALLDAFRLCVIHGDFERASIFAKKGTKAISLYEGTDSEKYLKISKYVENPRSHALAEGVPALPLFLEEDDELSDLEDNLWGCKLEEDVYSDTD</sequence>
<keyword id="KW-0158">Chromosome</keyword>
<keyword id="KW-0963">Cytoplasm</keyword>
<keyword id="KW-0489">Methyltransferase</keyword>
<keyword id="KW-0539">Nucleus</keyword>
<keyword id="KW-0597">Phosphoprotein</keyword>
<keyword id="KW-1185">Reference proteome</keyword>
<keyword id="KW-0949">S-adenosyl-L-methionine</keyword>
<keyword id="KW-0808">Transferase</keyword>
<comment type="function">
    <text evidence="1 4">Histone methyltransferase that monomethylates 'Lys-5', 'Lys-8' and 'Lys-12' of histone H4 (H4K5me1, H4K8me1 and H4K12me1, respectively), thereby controlling gene expression and remodeling chromatin structures (By similarity). Monomethylation of 'Lys-5' of histone H4 (H4K5me1) is required for subsequent acetylation and formation of N6-acetyl-N6-methyllysine (H4K5acme) (PubMed:37731000).</text>
</comment>
<comment type="catalytic activity">
    <reaction evidence="5 6">
        <text>L-lysyl-[histone] + S-adenosyl-L-methionine = N(6)-methyl-L-lysyl-[histone] + S-adenosyl-L-homocysteine + H(+)</text>
        <dbReference type="Rhea" id="RHEA:10024"/>
        <dbReference type="Rhea" id="RHEA-COMP:9845"/>
        <dbReference type="Rhea" id="RHEA-COMP:9846"/>
        <dbReference type="ChEBI" id="CHEBI:15378"/>
        <dbReference type="ChEBI" id="CHEBI:29969"/>
        <dbReference type="ChEBI" id="CHEBI:57856"/>
        <dbReference type="ChEBI" id="CHEBI:59789"/>
        <dbReference type="ChEBI" id="CHEBI:61929"/>
    </reaction>
    <physiologicalReaction direction="left-to-right" evidence="5">
        <dbReference type="Rhea" id="RHEA:10025"/>
    </physiologicalReaction>
</comment>
<comment type="subcellular location">
    <subcellularLocation>
        <location evidence="1">Nucleus</location>
    </subcellularLocation>
    <subcellularLocation>
        <location evidence="1">Chromosome</location>
    </subcellularLocation>
    <subcellularLocation>
        <location evidence="1">Cytoplasm</location>
    </subcellularLocation>
</comment>
<comment type="similarity">
    <text evidence="2">Belongs to the class V-like SAM-binding methyltransferase superfamily.</text>
</comment>
<dbReference type="EC" id="2.1.1.-" evidence="1"/>
<dbReference type="EMBL" id="CU329672">
    <property type="protein sequence ID" value="CAA20779.1"/>
    <property type="molecule type" value="Genomic_DNA"/>
</dbReference>
<dbReference type="PIR" id="T41113">
    <property type="entry name" value="T41113"/>
</dbReference>
<dbReference type="RefSeq" id="NP_588413.1">
    <property type="nucleotide sequence ID" value="NM_001023404.2"/>
</dbReference>
<dbReference type="SMR" id="O74467"/>
<dbReference type="BioGRID" id="275434">
    <property type="interactions" value="22"/>
</dbReference>
<dbReference type="FunCoup" id="O74467">
    <property type="interactions" value="1"/>
</dbReference>
<dbReference type="STRING" id="284812.O74467"/>
<dbReference type="iPTMnet" id="O74467"/>
<dbReference type="PaxDb" id="4896-SPCC1739.05.1"/>
<dbReference type="EnsemblFungi" id="SPCC1739.05.1">
    <property type="protein sequence ID" value="SPCC1739.05.1:pep"/>
    <property type="gene ID" value="SPCC1739.05"/>
</dbReference>
<dbReference type="GeneID" id="2538853"/>
<dbReference type="KEGG" id="spo:2538853"/>
<dbReference type="PomBase" id="SPCC1739.05">
    <property type="gene designation" value="set5"/>
</dbReference>
<dbReference type="VEuPathDB" id="FungiDB:SPCC1739.05"/>
<dbReference type="eggNOG" id="KOG2084">
    <property type="taxonomic scope" value="Eukaryota"/>
</dbReference>
<dbReference type="HOGENOM" id="CLU_028281_0_0_1"/>
<dbReference type="InParanoid" id="O74467"/>
<dbReference type="OMA" id="AFQICAM"/>
<dbReference type="PhylomeDB" id="O74467"/>
<dbReference type="PRO" id="PR:O74467"/>
<dbReference type="Proteomes" id="UP000002485">
    <property type="component" value="Chromosome III"/>
</dbReference>
<dbReference type="GO" id="GO:0000785">
    <property type="term" value="C:chromatin"/>
    <property type="evidence" value="ECO:0000305"/>
    <property type="project" value="PomBase"/>
</dbReference>
<dbReference type="GO" id="GO:0005829">
    <property type="term" value="C:cytosol"/>
    <property type="evidence" value="ECO:0007005"/>
    <property type="project" value="PomBase"/>
</dbReference>
<dbReference type="GO" id="GO:0005634">
    <property type="term" value="C:nucleus"/>
    <property type="evidence" value="ECO:0007005"/>
    <property type="project" value="PomBase"/>
</dbReference>
<dbReference type="GO" id="GO:0042054">
    <property type="term" value="F:histone methyltransferase activity"/>
    <property type="evidence" value="ECO:0000315"/>
    <property type="project" value="UniProtKB"/>
</dbReference>
<dbReference type="GO" id="GO:0016279">
    <property type="term" value="F:protein-lysine N-methyltransferase activity"/>
    <property type="evidence" value="ECO:0000315"/>
    <property type="project" value="PomBase"/>
</dbReference>
<dbReference type="GO" id="GO:0006338">
    <property type="term" value="P:chromatin remodeling"/>
    <property type="evidence" value="ECO:0000303"/>
    <property type="project" value="PomBase"/>
</dbReference>
<dbReference type="GO" id="GO:0032259">
    <property type="term" value="P:methylation"/>
    <property type="evidence" value="ECO:0007669"/>
    <property type="project" value="UniProtKB-KW"/>
</dbReference>
<dbReference type="CDD" id="cd20071">
    <property type="entry name" value="SET_SMYD"/>
    <property type="match status" value="1"/>
</dbReference>
<dbReference type="Gene3D" id="2.170.270.10">
    <property type="entry name" value="SET domain"/>
    <property type="match status" value="1"/>
</dbReference>
<dbReference type="Gene3D" id="1.25.40.10">
    <property type="entry name" value="Tetratricopeptide repeat domain"/>
    <property type="match status" value="1"/>
</dbReference>
<dbReference type="InterPro" id="IPR001214">
    <property type="entry name" value="SET_dom"/>
</dbReference>
<dbReference type="InterPro" id="IPR046341">
    <property type="entry name" value="SET_dom_sf"/>
</dbReference>
<dbReference type="InterPro" id="IPR053185">
    <property type="entry name" value="SET_domain_protein"/>
</dbReference>
<dbReference type="InterPro" id="IPR011990">
    <property type="entry name" value="TPR-like_helical_dom_sf"/>
</dbReference>
<dbReference type="PANTHER" id="PTHR47332">
    <property type="entry name" value="SET DOMAIN-CONTAINING PROTEIN 5"/>
    <property type="match status" value="1"/>
</dbReference>
<dbReference type="PANTHER" id="PTHR47332:SF4">
    <property type="entry name" value="SET DOMAIN-CONTAINING PROTEIN 5"/>
    <property type="match status" value="1"/>
</dbReference>
<dbReference type="Pfam" id="PF00856">
    <property type="entry name" value="SET"/>
    <property type="match status" value="1"/>
</dbReference>
<dbReference type="SMART" id="SM00317">
    <property type="entry name" value="SET"/>
    <property type="match status" value="1"/>
</dbReference>
<dbReference type="SUPFAM" id="SSF82199">
    <property type="entry name" value="SET domain"/>
    <property type="match status" value="1"/>
</dbReference>
<dbReference type="PROSITE" id="PS50280">
    <property type="entry name" value="SET"/>
    <property type="match status" value="1"/>
</dbReference>
<feature type="chain" id="PRO_0000317700" description="Histone-lysine N-methyltransferase set5">
    <location>
        <begin position="1"/>
        <end position="319"/>
    </location>
</feature>
<feature type="domain" description="SET" evidence="2">
    <location>
        <begin position="4"/>
        <end position="141"/>
    </location>
</feature>
<feature type="modified residue" description="Phosphoserine" evidence="3">
    <location>
        <position position="316"/>
    </location>
</feature>
<feature type="modified residue" description="Phosphothreonine" evidence="3">
    <location>
        <position position="318"/>
    </location>
</feature>
<proteinExistence type="evidence at protein level"/>
<reference key="1">
    <citation type="journal article" date="2002" name="Nature">
        <title>The genome sequence of Schizosaccharomyces pombe.</title>
        <authorList>
            <person name="Wood V."/>
            <person name="Gwilliam R."/>
            <person name="Rajandream M.A."/>
            <person name="Lyne M.H."/>
            <person name="Lyne R."/>
            <person name="Stewart A."/>
            <person name="Sgouros J.G."/>
            <person name="Peat N."/>
            <person name="Hayles J."/>
            <person name="Baker S.G."/>
            <person name="Basham D."/>
            <person name="Bowman S."/>
            <person name="Brooks K."/>
            <person name="Brown D."/>
            <person name="Brown S."/>
            <person name="Chillingworth T."/>
            <person name="Churcher C.M."/>
            <person name="Collins M."/>
            <person name="Connor R."/>
            <person name="Cronin A."/>
            <person name="Davis P."/>
            <person name="Feltwell T."/>
            <person name="Fraser A."/>
            <person name="Gentles S."/>
            <person name="Goble A."/>
            <person name="Hamlin N."/>
            <person name="Harris D.E."/>
            <person name="Hidalgo J."/>
            <person name="Hodgson G."/>
            <person name="Holroyd S."/>
            <person name="Hornsby T."/>
            <person name="Howarth S."/>
            <person name="Huckle E.J."/>
            <person name="Hunt S."/>
            <person name="Jagels K."/>
            <person name="James K.D."/>
            <person name="Jones L."/>
            <person name="Jones M."/>
            <person name="Leather S."/>
            <person name="McDonald S."/>
            <person name="McLean J."/>
            <person name="Mooney P."/>
            <person name="Moule S."/>
            <person name="Mungall K.L."/>
            <person name="Murphy L.D."/>
            <person name="Niblett D."/>
            <person name="Odell C."/>
            <person name="Oliver K."/>
            <person name="O'Neil S."/>
            <person name="Pearson D."/>
            <person name="Quail M.A."/>
            <person name="Rabbinowitsch E."/>
            <person name="Rutherford K.M."/>
            <person name="Rutter S."/>
            <person name="Saunders D."/>
            <person name="Seeger K."/>
            <person name="Sharp S."/>
            <person name="Skelton J."/>
            <person name="Simmonds M.N."/>
            <person name="Squares R."/>
            <person name="Squares S."/>
            <person name="Stevens K."/>
            <person name="Taylor K."/>
            <person name="Taylor R.G."/>
            <person name="Tivey A."/>
            <person name="Walsh S.V."/>
            <person name="Warren T."/>
            <person name="Whitehead S."/>
            <person name="Woodward J.R."/>
            <person name="Volckaert G."/>
            <person name="Aert R."/>
            <person name="Robben J."/>
            <person name="Grymonprez B."/>
            <person name="Weltjens I."/>
            <person name="Vanstreels E."/>
            <person name="Rieger M."/>
            <person name="Schaefer M."/>
            <person name="Mueller-Auer S."/>
            <person name="Gabel C."/>
            <person name="Fuchs M."/>
            <person name="Duesterhoeft A."/>
            <person name="Fritzc C."/>
            <person name="Holzer E."/>
            <person name="Moestl D."/>
            <person name="Hilbert H."/>
            <person name="Borzym K."/>
            <person name="Langer I."/>
            <person name="Beck A."/>
            <person name="Lehrach H."/>
            <person name="Reinhardt R."/>
            <person name="Pohl T.M."/>
            <person name="Eger P."/>
            <person name="Zimmermann W."/>
            <person name="Wedler H."/>
            <person name="Wambutt R."/>
            <person name="Purnelle B."/>
            <person name="Goffeau A."/>
            <person name="Cadieu E."/>
            <person name="Dreano S."/>
            <person name="Gloux S."/>
            <person name="Lelaure V."/>
            <person name="Mottier S."/>
            <person name="Galibert F."/>
            <person name="Aves S.J."/>
            <person name="Xiang Z."/>
            <person name="Hunt C."/>
            <person name="Moore K."/>
            <person name="Hurst S.M."/>
            <person name="Lucas M."/>
            <person name="Rochet M."/>
            <person name="Gaillardin C."/>
            <person name="Tallada V.A."/>
            <person name="Garzon A."/>
            <person name="Thode G."/>
            <person name="Daga R.R."/>
            <person name="Cruzado L."/>
            <person name="Jimenez J."/>
            <person name="Sanchez M."/>
            <person name="del Rey F."/>
            <person name="Benito J."/>
            <person name="Dominguez A."/>
            <person name="Revuelta J.L."/>
            <person name="Moreno S."/>
            <person name="Armstrong J."/>
            <person name="Forsburg S.L."/>
            <person name="Cerutti L."/>
            <person name="Lowe T."/>
            <person name="McCombie W.R."/>
            <person name="Paulsen I."/>
            <person name="Potashkin J."/>
            <person name="Shpakovski G.V."/>
            <person name="Ussery D."/>
            <person name="Barrell B.G."/>
            <person name="Nurse P."/>
        </authorList>
    </citation>
    <scope>NUCLEOTIDE SEQUENCE [LARGE SCALE GENOMIC DNA]</scope>
    <source>
        <strain>972 / ATCC 24843</strain>
    </source>
</reference>
<reference key="2">
    <citation type="journal article" date="2008" name="J. Proteome Res.">
        <title>Phosphoproteome analysis of fission yeast.</title>
        <authorList>
            <person name="Wilson-Grady J.T."/>
            <person name="Villen J."/>
            <person name="Gygi S.P."/>
        </authorList>
    </citation>
    <scope>PHOSPHORYLATION [LARGE SCALE ANALYSIS] AT SER-316 AND THR-318</scope>
    <scope>IDENTIFICATION BY MASS SPECTROMETRY</scope>
</reference>
<reference key="3">
    <citation type="journal article" date="2004" name="Cell">
        <title>Methylation of histone H4 lysine 20 controls recruitment of Crb2 to sites of DNA damage.</title>
        <authorList>
            <person name="Sanders S.L."/>
            <person name="Portoso M."/>
            <person name="Mata J."/>
            <person name="Baehler J."/>
            <person name="Allshire R.C."/>
            <person name="Kouzarides T."/>
        </authorList>
    </citation>
    <scope>CATALYTIC ACTIVITY</scope>
</reference>
<reference key="4">
    <citation type="journal article" date="2023" name="Nature">
        <title>Acetyl-methyllysine marks chromatin at active transcription start sites.</title>
        <authorList>
            <person name="Lu-Culligan W.J."/>
            <person name="Connor L.J."/>
            <person name="Xie Y."/>
            <person name="Ekundayo B.E."/>
            <person name="Rose B.T."/>
            <person name="Machyna M."/>
            <person name="Pintado-Urbanc A.P."/>
            <person name="Zimmer J.T."/>
            <person name="Vock I.W."/>
            <person name="Bhanu N.V."/>
            <person name="King M.C."/>
            <person name="Garcia B.A."/>
            <person name="Bleichert F."/>
            <person name="Simon M.D."/>
        </authorList>
    </citation>
    <scope>FUNCTION</scope>
    <scope>CATALYTIC ACTIVITY</scope>
</reference>
<organism>
    <name type="scientific">Schizosaccharomyces pombe (strain 972 / ATCC 24843)</name>
    <name type="common">Fission yeast</name>
    <dbReference type="NCBI Taxonomy" id="284812"/>
    <lineage>
        <taxon>Eukaryota</taxon>
        <taxon>Fungi</taxon>
        <taxon>Dikarya</taxon>
        <taxon>Ascomycota</taxon>
        <taxon>Taphrinomycotina</taxon>
        <taxon>Schizosaccharomycetes</taxon>
        <taxon>Schizosaccharomycetales</taxon>
        <taxon>Schizosaccharomycetaceae</taxon>
        <taxon>Schizosaccharomyces</taxon>
    </lineage>
</organism>